<feature type="signal peptide" evidence="1">
    <location>
        <begin position="1"/>
        <end position="20"/>
    </location>
</feature>
<feature type="chain" id="PRO_0000003500" description="Vitamin B12-binding protein">
    <location>
        <begin position="21"/>
        <end position="279"/>
    </location>
</feature>
<feature type="domain" description="Fe/B12 periplasmic-binding" evidence="1">
    <location>
        <begin position="24"/>
        <end position="276"/>
    </location>
</feature>
<feature type="site" description="Important for BtuC binding" evidence="1">
    <location>
        <position position="73"/>
    </location>
</feature>
<feature type="site" description="Important for BtuC binding" evidence="1">
    <location>
        <position position="208"/>
    </location>
</feature>
<feature type="disulfide bond" evidence="1">
    <location>
        <begin position="189"/>
        <end position="265"/>
    </location>
</feature>
<gene>
    <name evidence="1" type="primary">btuF</name>
    <name type="ordered locus">ECA3304</name>
</gene>
<accession>Q6D1Z3</accession>
<keyword id="KW-1015">Disulfide bond</keyword>
<keyword id="KW-0574">Periplasm</keyword>
<keyword id="KW-1185">Reference proteome</keyword>
<keyword id="KW-0732">Signal</keyword>
<keyword id="KW-0813">Transport</keyword>
<evidence type="ECO:0000255" key="1">
    <source>
        <dbReference type="HAMAP-Rule" id="MF_01000"/>
    </source>
</evidence>
<organism>
    <name type="scientific">Pectobacterium atrosepticum (strain SCRI 1043 / ATCC BAA-672)</name>
    <name type="common">Erwinia carotovora subsp. atroseptica</name>
    <dbReference type="NCBI Taxonomy" id="218491"/>
    <lineage>
        <taxon>Bacteria</taxon>
        <taxon>Pseudomonadati</taxon>
        <taxon>Pseudomonadota</taxon>
        <taxon>Gammaproteobacteria</taxon>
        <taxon>Enterobacterales</taxon>
        <taxon>Pectobacteriaceae</taxon>
        <taxon>Pectobacterium</taxon>
    </lineage>
</organism>
<protein>
    <recommendedName>
        <fullName evidence="1">Vitamin B12-binding protein</fullName>
    </recommendedName>
</protein>
<name>BTUF_PECAS</name>
<sequence length="279" mass="30923">MTFRFLCWLTGLLLCTAAYAIPQRVISLAPHATEMAYAAGMGEQLIAVSAWSDYPPEAKKLEQVASWQGINLERILALKPDLILAWREGNPQRPLEQLANFSIPIVYLDAKTLDDIPASLRQLATYSRHPEQAERAATDFQQQIGELQHADEKHKAAHTAPLRVFIQFGTQPLFTSSKATLQSQIVSLCGAENIFSDSTVPWPQVSREQVLRRQPQAIIIGGASDKIANTQAFWQPQLTVPVITVNEDWFSRSGPRLLLAAQQICSQLAELKLAPSSAK</sequence>
<proteinExistence type="inferred from homology"/>
<dbReference type="EMBL" id="BX950851">
    <property type="protein sequence ID" value="CAG76202.1"/>
    <property type="molecule type" value="Genomic_DNA"/>
</dbReference>
<dbReference type="RefSeq" id="WP_011094821.1">
    <property type="nucleotide sequence ID" value="NC_004547.2"/>
</dbReference>
<dbReference type="SMR" id="Q6D1Z3"/>
<dbReference type="STRING" id="218491.ECA3304"/>
<dbReference type="GeneID" id="57209994"/>
<dbReference type="KEGG" id="eca:ECA3304"/>
<dbReference type="PATRIC" id="fig|218491.5.peg.3352"/>
<dbReference type="eggNOG" id="COG0614">
    <property type="taxonomic scope" value="Bacteria"/>
</dbReference>
<dbReference type="HOGENOM" id="CLU_038034_2_5_6"/>
<dbReference type="OrthoDB" id="6495095at2"/>
<dbReference type="Proteomes" id="UP000007966">
    <property type="component" value="Chromosome"/>
</dbReference>
<dbReference type="GO" id="GO:0042597">
    <property type="term" value="C:periplasmic space"/>
    <property type="evidence" value="ECO:0007669"/>
    <property type="project" value="UniProtKB-SubCell"/>
</dbReference>
<dbReference type="GO" id="GO:0031419">
    <property type="term" value="F:cobalamin binding"/>
    <property type="evidence" value="ECO:0007669"/>
    <property type="project" value="InterPro"/>
</dbReference>
<dbReference type="GO" id="GO:0015889">
    <property type="term" value="P:cobalamin transport"/>
    <property type="evidence" value="ECO:0007669"/>
    <property type="project" value="UniProtKB-UniRule"/>
</dbReference>
<dbReference type="CDD" id="cd01144">
    <property type="entry name" value="BtuF"/>
    <property type="match status" value="1"/>
</dbReference>
<dbReference type="Gene3D" id="3.40.50.1980">
    <property type="entry name" value="Nitrogenase molybdenum iron protein domain"/>
    <property type="match status" value="2"/>
</dbReference>
<dbReference type="HAMAP" id="MF_01000">
    <property type="entry name" value="BtuF"/>
    <property type="match status" value="1"/>
</dbReference>
<dbReference type="InterPro" id="IPR002491">
    <property type="entry name" value="ABC_transptr_periplasmic_BD"/>
</dbReference>
<dbReference type="InterPro" id="IPR023544">
    <property type="entry name" value="ABC_transptr_vit_B12-bd"/>
</dbReference>
<dbReference type="InterPro" id="IPR054828">
    <property type="entry name" value="Vit_B12_bind_prot"/>
</dbReference>
<dbReference type="InterPro" id="IPR051030">
    <property type="entry name" value="Vitamin_B12-ABC_binding"/>
</dbReference>
<dbReference type="NCBIfam" id="NF002894">
    <property type="entry name" value="PRK03379.1"/>
    <property type="match status" value="1"/>
</dbReference>
<dbReference type="NCBIfam" id="NF038402">
    <property type="entry name" value="TroA_like"/>
    <property type="match status" value="1"/>
</dbReference>
<dbReference type="PANTHER" id="PTHR42860">
    <property type="entry name" value="VITAMIN B12-BINDING PROTEIN"/>
    <property type="match status" value="1"/>
</dbReference>
<dbReference type="PANTHER" id="PTHR42860:SF1">
    <property type="entry name" value="VITAMIN B12-BINDING PROTEIN"/>
    <property type="match status" value="1"/>
</dbReference>
<dbReference type="Pfam" id="PF01497">
    <property type="entry name" value="Peripla_BP_2"/>
    <property type="match status" value="1"/>
</dbReference>
<dbReference type="SUPFAM" id="SSF53807">
    <property type="entry name" value="Helical backbone' metal receptor"/>
    <property type="match status" value="1"/>
</dbReference>
<dbReference type="PROSITE" id="PS50983">
    <property type="entry name" value="FE_B12_PBP"/>
    <property type="match status" value="1"/>
</dbReference>
<reference key="1">
    <citation type="journal article" date="2004" name="Proc. Natl. Acad. Sci. U.S.A.">
        <title>Genome sequence of the enterobacterial phytopathogen Erwinia carotovora subsp. atroseptica and characterization of virulence factors.</title>
        <authorList>
            <person name="Bell K.S."/>
            <person name="Sebaihia M."/>
            <person name="Pritchard L."/>
            <person name="Holden M.T.G."/>
            <person name="Hyman L.J."/>
            <person name="Holeva M.C."/>
            <person name="Thomson N.R."/>
            <person name="Bentley S.D."/>
            <person name="Churcher L.J.C."/>
            <person name="Mungall K."/>
            <person name="Atkin R."/>
            <person name="Bason N."/>
            <person name="Brooks K."/>
            <person name="Chillingworth T."/>
            <person name="Clark K."/>
            <person name="Doggett J."/>
            <person name="Fraser A."/>
            <person name="Hance Z."/>
            <person name="Hauser H."/>
            <person name="Jagels K."/>
            <person name="Moule S."/>
            <person name="Norbertczak H."/>
            <person name="Ormond D."/>
            <person name="Price C."/>
            <person name="Quail M.A."/>
            <person name="Sanders M."/>
            <person name="Walker D."/>
            <person name="Whitehead S."/>
            <person name="Salmond G.P.C."/>
            <person name="Birch P.R.J."/>
            <person name="Parkhill J."/>
            <person name="Toth I.K."/>
        </authorList>
    </citation>
    <scope>NUCLEOTIDE SEQUENCE [LARGE SCALE GENOMIC DNA]</scope>
    <source>
        <strain>SCRI 1043 / ATCC BAA-672</strain>
    </source>
</reference>
<comment type="function">
    <text evidence="1">Part of the ABC transporter complex BtuCDF involved in vitamin B12 import. Binds vitamin B12 and delivers it to the periplasmic surface of BtuC.</text>
</comment>
<comment type="subunit">
    <text evidence="1">The complex is composed of two ATP-binding proteins (BtuD), two transmembrane proteins (BtuC) and a solute-binding protein (BtuF).</text>
</comment>
<comment type="subcellular location">
    <subcellularLocation>
        <location evidence="1">Periplasm</location>
    </subcellularLocation>
</comment>
<comment type="similarity">
    <text evidence="1">Belongs to the BtuF family.</text>
</comment>